<accession>Q7MWN0</accession>
<name>RSMH_PORGI</name>
<feature type="chain" id="PRO_0000108680" description="Ribosomal RNA small subunit methyltransferase H">
    <location>
        <begin position="1"/>
        <end position="311"/>
    </location>
</feature>
<feature type="binding site" evidence="1">
    <location>
        <begin position="39"/>
        <end position="41"/>
    </location>
    <ligand>
        <name>S-adenosyl-L-methionine</name>
        <dbReference type="ChEBI" id="CHEBI:59789"/>
    </ligand>
</feature>
<feature type="binding site" evidence="1">
    <location>
        <position position="59"/>
    </location>
    <ligand>
        <name>S-adenosyl-L-methionine</name>
        <dbReference type="ChEBI" id="CHEBI:59789"/>
    </ligand>
</feature>
<feature type="binding site" evidence="1">
    <location>
        <position position="81"/>
    </location>
    <ligand>
        <name>S-adenosyl-L-methionine</name>
        <dbReference type="ChEBI" id="CHEBI:59789"/>
    </ligand>
</feature>
<feature type="binding site" evidence="1">
    <location>
        <position position="102"/>
    </location>
    <ligand>
        <name>S-adenosyl-L-methionine</name>
        <dbReference type="ChEBI" id="CHEBI:59789"/>
    </ligand>
</feature>
<feature type="binding site" evidence="1">
    <location>
        <position position="109"/>
    </location>
    <ligand>
        <name>S-adenosyl-L-methionine</name>
        <dbReference type="ChEBI" id="CHEBI:59789"/>
    </ligand>
</feature>
<sequence length="311" mass="34798">MHCPDKESVYHIPVMLGECLEGLRIDPDGCYVDVTFGGGGHSRAIVEKLSSKGRLYGFDQDADACRNILQDERFTFVTSNFRYLANFMDYYGEDGVDGILADLGVSSHHFDEEERGFSFRSESPLLDMRMNARAGRNAAAILNEYDASSLSALFYHYGELKQARRFAASIVHYRESLSGGLQTVGQLLEAVRGLISPREEKKQLACIFQALRIEVNDELGALQQMLEAALGCLRSGGRLVVMTYHSLEDRMVKNVLRYGTVKAPDEDSLRLYGAPQSPWQQITRKPLTASTKELSDNPRSRSAKLRIAEKI</sequence>
<protein>
    <recommendedName>
        <fullName evidence="1">Ribosomal RNA small subunit methyltransferase H</fullName>
        <ecNumber evidence="1">2.1.1.199</ecNumber>
    </recommendedName>
    <alternativeName>
        <fullName evidence="1">16S rRNA m(4)C1402 methyltransferase</fullName>
    </alternativeName>
    <alternativeName>
        <fullName evidence="1">rRNA (cytosine-N(4)-)-methyltransferase RsmH</fullName>
    </alternativeName>
</protein>
<dbReference type="EC" id="2.1.1.199" evidence="1"/>
<dbReference type="EMBL" id="AE015924">
    <property type="protein sequence ID" value="AAQ65760.1"/>
    <property type="molecule type" value="Genomic_DNA"/>
</dbReference>
<dbReference type="RefSeq" id="WP_005873934.1">
    <property type="nucleotide sequence ID" value="NC_002950.2"/>
</dbReference>
<dbReference type="SMR" id="Q7MWN0"/>
<dbReference type="STRING" id="242619.PG_0573"/>
<dbReference type="EnsemblBacteria" id="AAQ65760">
    <property type="protein sequence ID" value="AAQ65760"/>
    <property type="gene ID" value="PG_0573"/>
</dbReference>
<dbReference type="KEGG" id="pgi:PG_0573"/>
<dbReference type="PATRIC" id="fig|242619.8.peg.522"/>
<dbReference type="eggNOG" id="COG0275">
    <property type="taxonomic scope" value="Bacteria"/>
</dbReference>
<dbReference type="HOGENOM" id="CLU_038422_2_0_10"/>
<dbReference type="BioCyc" id="PGIN242619:G1G02-531-MONOMER"/>
<dbReference type="Proteomes" id="UP000000588">
    <property type="component" value="Chromosome"/>
</dbReference>
<dbReference type="GO" id="GO:0005737">
    <property type="term" value="C:cytoplasm"/>
    <property type="evidence" value="ECO:0007669"/>
    <property type="project" value="UniProtKB-SubCell"/>
</dbReference>
<dbReference type="GO" id="GO:0071424">
    <property type="term" value="F:rRNA (cytosine-N4-)-methyltransferase activity"/>
    <property type="evidence" value="ECO:0007669"/>
    <property type="project" value="UniProtKB-UniRule"/>
</dbReference>
<dbReference type="GO" id="GO:0070475">
    <property type="term" value="P:rRNA base methylation"/>
    <property type="evidence" value="ECO:0007669"/>
    <property type="project" value="UniProtKB-UniRule"/>
</dbReference>
<dbReference type="Gene3D" id="1.10.150.170">
    <property type="entry name" value="Putative methyltransferase TM0872, insert domain"/>
    <property type="match status" value="1"/>
</dbReference>
<dbReference type="Gene3D" id="3.40.50.150">
    <property type="entry name" value="Vaccinia Virus protein VP39"/>
    <property type="match status" value="1"/>
</dbReference>
<dbReference type="HAMAP" id="MF_01007">
    <property type="entry name" value="16SrRNA_methyltr_H"/>
    <property type="match status" value="1"/>
</dbReference>
<dbReference type="InterPro" id="IPR002903">
    <property type="entry name" value="RsmH"/>
</dbReference>
<dbReference type="InterPro" id="IPR023397">
    <property type="entry name" value="SAM-dep_MeTrfase_MraW_recog"/>
</dbReference>
<dbReference type="InterPro" id="IPR029063">
    <property type="entry name" value="SAM-dependent_MTases_sf"/>
</dbReference>
<dbReference type="NCBIfam" id="TIGR00006">
    <property type="entry name" value="16S rRNA (cytosine(1402)-N(4))-methyltransferase RsmH"/>
    <property type="match status" value="1"/>
</dbReference>
<dbReference type="PANTHER" id="PTHR11265:SF0">
    <property type="entry name" value="12S RRNA N4-METHYLCYTIDINE METHYLTRANSFERASE"/>
    <property type="match status" value="1"/>
</dbReference>
<dbReference type="PANTHER" id="PTHR11265">
    <property type="entry name" value="S-ADENOSYL-METHYLTRANSFERASE MRAW"/>
    <property type="match status" value="1"/>
</dbReference>
<dbReference type="Pfam" id="PF01795">
    <property type="entry name" value="Methyltransf_5"/>
    <property type="match status" value="1"/>
</dbReference>
<dbReference type="PIRSF" id="PIRSF004486">
    <property type="entry name" value="MraW"/>
    <property type="match status" value="1"/>
</dbReference>
<dbReference type="SUPFAM" id="SSF81799">
    <property type="entry name" value="Putative methyltransferase TM0872, insert domain"/>
    <property type="match status" value="1"/>
</dbReference>
<dbReference type="SUPFAM" id="SSF53335">
    <property type="entry name" value="S-adenosyl-L-methionine-dependent methyltransferases"/>
    <property type="match status" value="1"/>
</dbReference>
<gene>
    <name evidence="1" type="primary">rsmH</name>
    <name type="synonym">mraW</name>
    <name type="ordered locus">PG_0573</name>
</gene>
<reference key="1">
    <citation type="journal article" date="2003" name="J. Bacteriol.">
        <title>Complete genome sequence of the oral pathogenic bacterium Porphyromonas gingivalis strain W83.</title>
        <authorList>
            <person name="Nelson K.E."/>
            <person name="Fleischmann R.D."/>
            <person name="DeBoy R.T."/>
            <person name="Paulsen I.T."/>
            <person name="Fouts D.E."/>
            <person name="Eisen J.A."/>
            <person name="Daugherty S.C."/>
            <person name="Dodson R.J."/>
            <person name="Durkin A.S."/>
            <person name="Gwinn M.L."/>
            <person name="Haft D.H."/>
            <person name="Kolonay J.F."/>
            <person name="Nelson W.C."/>
            <person name="Mason T.M."/>
            <person name="Tallon L."/>
            <person name="Gray J."/>
            <person name="Granger D."/>
            <person name="Tettelin H."/>
            <person name="Dong H."/>
            <person name="Galvin J.L."/>
            <person name="Duncan M.J."/>
            <person name="Dewhirst F.E."/>
            <person name="Fraser C.M."/>
        </authorList>
    </citation>
    <scope>NUCLEOTIDE SEQUENCE [LARGE SCALE GENOMIC DNA]</scope>
    <source>
        <strain>ATCC BAA-308 / W83</strain>
    </source>
</reference>
<comment type="function">
    <text evidence="1">Specifically methylates the N4 position of cytidine in position 1402 (C1402) of 16S rRNA.</text>
</comment>
<comment type="catalytic activity">
    <reaction evidence="1">
        <text>cytidine(1402) in 16S rRNA + S-adenosyl-L-methionine = N(4)-methylcytidine(1402) in 16S rRNA + S-adenosyl-L-homocysteine + H(+)</text>
        <dbReference type="Rhea" id="RHEA:42928"/>
        <dbReference type="Rhea" id="RHEA-COMP:10286"/>
        <dbReference type="Rhea" id="RHEA-COMP:10287"/>
        <dbReference type="ChEBI" id="CHEBI:15378"/>
        <dbReference type="ChEBI" id="CHEBI:57856"/>
        <dbReference type="ChEBI" id="CHEBI:59789"/>
        <dbReference type="ChEBI" id="CHEBI:74506"/>
        <dbReference type="ChEBI" id="CHEBI:82748"/>
        <dbReference type="EC" id="2.1.1.199"/>
    </reaction>
</comment>
<comment type="subcellular location">
    <subcellularLocation>
        <location evidence="1">Cytoplasm</location>
    </subcellularLocation>
</comment>
<comment type="similarity">
    <text evidence="1">Belongs to the methyltransferase superfamily. RsmH family.</text>
</comment>
<organism>
    <name type="scientific">Porphyromonas gingivalis (strain ATCC BAA-308 / W83)</name>
    <dbReference type="NCBI Taxonomy" id="242619"/>
    <lineage>
        <taxon>Bacteria</taxon>
        <taxon>Pseudomonadati</taxon>
        <taxon>Bacteroidota</taxon>
        <taxon>Bacteroidia</taxon>
        <taxon>Bacteroidales</taxon>
        <taxon>Porphyromonadaceae</taxon>
        <taxon>Porphyromonas</taxon>
    </lineage>
</organism>
<evidence type="ECO:0000255" key="1">
    <source>
        <dbReference type="HAMAP-Rule" id="MF_01007"/>
    </source>
</evidence>
<proteinExistence type="inferred from homology"/>
<keyword id="KW-0963">Cytoplasm</keyword>
<keyword id="KW-0489">Methyltransferase</keyword>
<keyword id="KW-1185">Reference proteome</keyword>
<keyword id="KW-0698">rRNA processing</keyword>
<keyword id="KW-0949">S-adenosyl-L-methionine</keyword>
<keyword id="KW-0808">Transferase</keyword>